<feature type="chain" id="PRO_0000144263" description="V-type ATP synthase subunit D">
    <location>
        <begin position="1"/>
        <end position="202"/>
    </location>
</feature>
<accession>O51119</accession>
<protein>
    <recommendedName>
        <fullName>V-type ATP synthase subunit D</fullName>
    </recommendedName>
    <alternativeName>
        <fullName>V-ATPase subunit D</fullName>
    </alternativeName>
</protein>
<name>VATD_BORBU</name>
<comment type="function">
    <text evidence="1">Produces ATP from ADP in the presence of a proton gradient across the membrane.</text>
</comment>
<comment type="similarity">
    <text evidence="2">Belongs to the V-ATPase D subunit family.</text>
</comment>
<gene>
    <name type="primary">atpD</name>
    <name type="ordered locus">BB_0092</name>
</gene>
<sequence>MSKIKLTKNDLKKQKDELKMFKRYLPTLQLKKQQLYMEIVKIENSYKIKNLEQQKLKENISNWISLFSEKFPFESWIQVKTVVKKSLNIAGVAIPIFDSIEYEDIRHDLLFTPYWVDKGIEILKVVIQIDVELKILKKQIDLLLREFRITSQRVNLFEKVMIPTAKANIKKINIYLGDQQTAAVVRGKIAKSSLIKKNRNSL</sequence>
<organism>
    <name type="scientific">Borreliella burgdorferi (strain ATCC 35210 / DSM 4680 / CIP 102532 / B31)</name>
    <name type="common">Borrelia burgdorferi</name>
    <dbReference type="NCBI Taxonomy" id="224326"/>
    <lineage>
        <taxon>Bacteria</taxon>
        <taxon>Pseudomonadati</taxon>
        <taxon>Spirochaetota</taxon>
        <taxon>Spirochaetia</taxon>
        <taxon>Spirochaetales</taxon>
        <taxon>Borreliaceae</taxon>
        <taxon>Borreliella</taxon>
    </lineage>
</organism>
<reference key="1">
    <citation type="journal article" date="1997" name="Nature">
        <title>Genomic sequence of a Lyme disease spirochaete, Borrelia burgdorferi.</title>
        <authorList>
            <person name="Fraser C.M."/>
            <person name="Casjens S."/>
            <person name="Huang W.M."/>
            <person name="Sutton G.G."/>
            <person name="Clayton R.A."/>
            <person name="Lathigra R."/>
            <person name="White O."/>
            <person name="Ketchum K.A."/>
            <person name="Dodson R.J."/>
            <person name="Hickey E.K."/>
            <person name="Gwinn M.L."/>
            <person name="Dougherty B.A."/>
            <person name="Tomb J.-F."/>
            <person name="Fleischmann R.D."/>
            <person name="Richardson D.L."/>
            <person name="Peterson J.D."/>
            <person name="Kerlavage A.R."/>
            <person name="Quackenbush J."/>
            <person name="Salzberg S.L."/>
            <person name="Hanson M."/>
            <person name="van Vugt R."/>
            <person name="Palmer N."/>
            <person name="Adams M.D."/>
            <person name="Gocayne J.D."/>
            <person name="Weidman J.F."/>
            <person name="Utterback T.R."/>
            <person name="Watthey L."/>
            <person name="McDonald L.A."/>
            <person name="Artiach P."/>
            <person name="Bowman C."/>
            <person name="Garland S.A."/>
            <person name="Fujii C."/>
            <person name="Cotton M.D."/>
            <person name="Horst K."/>
            <person name="Roberts K.M."/>
            <person name="Hatch B."/>
            <person name="Smith H.O."/>
            <person name="Venter J.C."/>
        </authorList>
    </citation>
    <scope>NUCLEOTIDE SEQUENCE [LARGE SCALE GENOMIC DNA]</scope>
    <source>
        <strain>ATCC 35210 / DSM 4680 / CIP 102532 / B31</strain>
    </source>
</reference>
<evidence type="ECO:0000250" key="1"/>
<evidence type="ECO:0000305" key="2"/>
<keyword id="KW-0066">ATP synthesis</keyword>
<keyword id="KW-0375">Hydrogen ion transport</keyword>
<keyword id="KW-0406">Ion transport</keyword>
<keyword id="KW-1185">Reference proteome</keyword>
<keyword id="KW-0813">Transport</keyword>
<dbReference type="EMBL" id="AE000783">
    <property type="protein sequence ID" value="AAC66485.2"/>
    <property type="molecule type" value="Genomic_DNA"/>
</dbReference>
<dbReference type="PIR" id="D70111">
    <property type="entry name" value="D70111"/>
</dbReference>
<dbReference type="RefSeq" id="NP_212226.2">
    <property type="nucleotide sequence ID" value="NC_001318.1"/>
</dbReference>
<dbReference type="RefSeq" id="WP_002556694.1">
    <property type="nucleotide sequence ID" value="NC_001318.1"/>
</dbReference>
<dbReference type="SMR" id="O51119"/>
<dbReference type="STRING" id="224326.BB_0092"/>
<dbReference type="PaxDb" id="224326-BB_0092"/>
<dbReference type="EnsemblBacteria" id="AAC66485">
    <property type="protein sequence ID" value="AAC66485"/>
    <property type="gene ID" value="BB_0092"/>
</dbReference>
<dbReference type="KEGG" id="bbu:BB_0092"/>
<dbReference type="PATRIC" id="fig|224326.49.peg.490"/>
<dbReference type="HOGENOM" id="CLU_113661_0_0_12"/>
<dbReference type="OrthoDB" id="5637912at2"/>
<dbReference type="Proteomes" id="UP000001807">
    <property type="component" value="Chromosome"/>
</dbReference>
<dbReference type="GO" id="GO:0005524">
    <property type="term" value="F:ATP binding"/>
    <property type="evidence" value="ECO:0007669"/>
    <property type="project" value="UniProtKB-UniRule"/>
</dbReference>
<dbReference type="GO" id="GO:0046933">
    <property type="term" value="F:proton-transporting ATP synthase activity, rotational mechanism"/>
    <property type="evidence" value="ECO:0007669"/>
    <property type="project" value="UniProtKB-UniRule"/>
</dbReference>
<dbReference type="GO" id="GO:0046961">
    <property type="term" value="F:proton-transporting ATPase activity, rotational mechanism"/>
    <property type="evidence" value="ECO:0007669"/>
    <property type="project" value="InterPro"/>
</dbReference>
<dbReference type="GO" id="GO:0042777">
    <property type="term" value="P:proton motive force-driven plasma membrane ATP synthesis"/>
    <property type="evidence" value="ECO:0007669"/>
    <property type="project" value="UniProtKB-UniRule"/>
</dbReference>
<dbReference type="Gene3D" id="1.10.287.3240">
    <property type="match status" value="1"/>
</dbReference>
<dbReference type="HAMAP" id="MF_00271">
    <property type="entry name" value="ATP_synth_D_arch"/>
    <property type="match status" value="1"/>
</dbReference>
<dbReference type="InterPro" id="IPR002699">
    <property type="entry name" value="V_ATPase_D"/>
</dbReference>
<dbReference type="NCBIfam" id="NF002565">
    <property type="entry name" value="PRK02195.1"/>
    <property type="match status" value="1"/>
</dbReference>
<dbReference type="NCBIfam" id="TIGR00309">
    <property type="entry name" value="V_ATPase_subD"/>
    <property type="match status" value="1"/>
</dbReference>
<dbReference type="Pfam" id="PF01813">
    <property type="entry name" value="ATP-synt_D"/>
    <property type="match status" value="1"/>
</dbReference>
<proteinExistence type="inferred from homology"/>